<accession>Q2G297</accession>
<reference key="1">
    <citation type="book" date="2006" name="Gram positive pathogens, 2nd edition">
        <title>The Staphylococcus aureus NCTC 8325 genome.</title>
        <editorList>
            <person name="Fischetti V."/>
            <person name="Novick R."/>
            <person name="Ferretti J."/>
            <person name="Portnoy D."/>
            <person name="Rood J."/>
        </editorList>
        <authorList>
            <person name="Gillaspy A.F."/>
            <person name="Worrell V."/>
            <person name="Orvis J."/>
            <person name="Roe B.A."/>
            <person name="Dyer D.W."/>
            <person name="Iandolo J.J."/>
        </authorList>
    </citation>
    <scope>NUCLEOTIDE SEQUENCE [LARGE SCALE GENOMIC DNA]</scope>
    <source>
        <strain>NCTC 8325 / PS 47</strain>
    </source>
</reference>
<reference key="2">
    <citation type="journal article" date="2020" name="J. Bacteriol.">
        <title>Functional characterization of COG1713 (YqeK) as a novel diadenosine tetraphosphate hydrolase family.</title>
        <authorList>
            <person name="Minazzato G."/>
            <person name="Gasparrini M."/>
            <person name="Amici A."/>
            <person name="Cianci M."/>
            <person name="Mazzola F."/>
            <person name="Orsomando G."/>
            <person name="Sorci L."/>
            <person name="Raffaelli N."/>
        </authorList>
    </citation>
    <scope>FUNCTION</scope>
    <scope>CATALYTIC ACTIVITY</scope>
    <scope>ACTIVITY REGULATION</scope>
    <scope>BIOPHYSICOCHEMICAL PROPERTIES</scope>
    <scope>SUBUNIT</scope>
</reference>
<keyword id="KW-0378">Hydrolase</keyword>
<keyword id="KW-0408">Iron</keyword>
<keyword id="KW-0479">Metal-binding</keyword>
<keyword id="KW-0547">Nucleotide-binding</keyword>
<keyword id="KW-1185">Reference proteome</keyword>
<comment type="function">
    <text evidence="3">Hydrolyzes diadenosine 5',5'''-P1,P4-tetraphosphate (Ap4A) to yield ADP (PubMed:32152217). Can also hydrolyze Ap3A, Ap5A, Ap4G, Ap4U and Gp4G, always releasing ADP or GDP as one of the products, but it exhibits a marked preference for Ap4A, which is mainly exerted at the substrate affinity level (PubMed:32152217).</text>
</comment>
<comment type="catalytic activity">
    <reaction evidence="3">
        <text>P(1),P(4)-bis(5'-adenosyl) tetraphosphate + H2O = 2 ADP + 2 H(+)</text>
        <dbReference type="Rhea" id="RHEA:24252"/>
        <dbReference type="ChEBI" id="CHEBI:15377"/>
        <dbReference type="ChEBI" id="CHEBI:15378"/>
        <dbReference type="ChEBI" id="CHEBI:58141"/>
        <dbReference type="ChEBI" id="CHEBI:456216"/>
        <dbReference type="EC" id="3.6.1.41"/>
    </reaction>
</comment>
<comment type="activity regulation">
    <text evidence="3">Inhibited by EDTA.</text>
</comment>
<comment type="biophysicochemical properties">
    <kinetics>
        <KM evidence="3">3.2 uM for Ap4A</KM>
        <KM evidence="3">21.5 uM for Ap5A</KM>
        <KM evidence="3">19.7 uM for Ap4G</KM>
        <KM evidence="3">17.6 uM for Ap4U</KM>
        <KM evidence="3">68 uM for Gp4G</KM>
        <text evidence="3">kcat is 107 sec(-1) with Ap4A as substrate. kcat is 32 sec(-1) with Ap5A as substrate. kcat is 210 sec(-1) with Ap4G as substrate. kcat is 324 sec(-1) with Ap4U as substrate. kcat is 1002 sec(-1) with Gp4G as substrate.</text>
    </kinetics>
</comment>
<comment type="subunit">
    <text evidence="3">Homodimer.</text>
</comment>
<comment type="similarity">
    <text evidence="5">Belongs to the Ap4A hydrolase YqeK family.</text>
</comment>
<gene>
    <name evidence="4" type="primary">yqeK</name>
    <name evidence="6" type="ordered locus">SAOUHSC_01696</name>
</gene>
<dbReference type="EC" id="3.6.1.41" evidence="3"/>
<dbReference type="EMBL" id="CP000253">
    <property type="protein sequence ID" value="ABD30770.1"/>
    <property type="molecule type" value="Genomic_DNA"/>
</dbReference>
<dbReference type="RefSeq" id="WP_001019324.1">
    <property type="nucleotide sequence ID" value="NZ_LS483365.1"/>
</dbReference>
<dbReference type="RefSeq" id="YP_500206.1">
    <property type="nucleotide sequence ID" value="NC_007795.1"/>
</dbReference>
<dbReference type="SMR" id="Q2G297"/>
<dbReference type="STRING" id="93061.SAOUHSC_01696"/>
<dbReference type="PaxDb" id="1280-SAXN108_1618"/>
<dbReference type="GeneID" id="3921808"/>
<dbReference type="KEGG" id="sao:SAOUHSC_01696"/>
<dbReference type="PATRIC" id="fig|93061.5.peg.1545"/>
<dbReference type="eggNOG" id="COG1713">
    <property type="taxonomic scope" value="Bacteria"/>
</dbReference>
<dbReference type="HOGENOM" id="CLU_089580_1_1_9"/>
<dbReference type="OrthoDB" id="9782134at2"/>
<dbReference type="Proteomes" id="UP000008816">
    <property type="component" value="Chromosome"/>
</dbReference>
<dbReference type="GO" id="GO:0016787">
    <property type="term" value="F:hydrolase activity"/>
    <property type="evidence" value="ECO:0007669"/>
    <property type="project" value="UniProtKB-KW"/>
</dbReference>
<dbReference type="GO" id="GO:0046872">
    <property type="term" value="F:metal ion binding"/>
    <property type="evidence" value="ECO:0007669"/>
    <property type="project" value="UniProtKB-KW"/>
</dbReference>
<dbReference type="GO" id="GO:0000166">
    <property type="term" value="F:nucleotide binding"/>
    <property type="evidence" value="ECO:0007669"/>
    <property type="project" value="UniProtKB-KW"/>
</dbReference>
<dbReference type="CDD" id="cd00077">
    <property type="entry name" value="HDc"/>
    <property type="match status" value="1"/>
</dbReference>
<dbReference type="Gene3D" id="1.10.3210.10">
    <property type="entry name" value="Hypothetical protein af1432"/>
    <property type="match status" value="1"/>
</dbReference>
<dbReference type="InterPro" id="IPR051094">
    <property type="entry name" value="Diverse_Catalytic_Enzymes"/>
</dbReference>
<dbReference type="InterPro" id="IPR003607">
    <property type="entry name" value="HD/PDEase_dom"/>
</dbReference>
<dbReference type="InterPro" id="IPR006674">
    <property type="entry name" value="HD_domain"/>
</dbReference>
<dbReference type="InterPro" id="IPR005249">
    <property type="entry name" value="YqeK"/>
</dbReference>
<dbReference type="NCBIfam" id="TIGR00488">
    <property type="entry name" value="bis(5'-nucleosyl)-tetraphosphatase (symmetrical) YqeK"/>
    <property type="match status" value="1"/>
</dbReference>
<dbReference type="PANTHER" id="PTHR35795:SF1">
    <property type="entry name" value="BIS(5'-NUCLEOSYL)-TETRAPHOSPHATASE, SYMMETRICAL"/>
    <property type="match status" value="1"/>
</dbReference>
<dbReference type="PANTHER" id="PTHR35795">
    <property type="entry name" value="SLR1885 PROTEIN"/>
    <property type="match status" value="1"/>
</dbReference>
<dbReference type="Pfam" id="PF01966">
    <property type="entry name" value="HD"/>
    <property type="match status" value="1"/>
</dbReference>
<dbReference type="SMART" id="SM00471">
    <property type="entry name" value="HDc"/>
    <property type="match status" value="1"/>
</dbReference>
<dbReference type="SUPFAM" id="SSF109604">
    <property type="entry name" value="HD-domain/PDEase-like"/>
    <property type="match status" value="1"/>
</dbReference>
<dbReference type="PROSITE" id="PS51831">
    <property type="entry name" value="HD"/>
    <property type="match status" value="1"/>
</dbReference>
<feature type="chain" id="PRO_0000454778" description="Bis(5'-nucleosyl)-tetraphosphatase, symmetrical">
    <location>
        <begin position="1"/>
        <end position="194"/>
    </location>
</feature>
<feature type="domain" description="HD" evidence="2">
    <location>
        <begin position="18"/>
        <end position="132"/>
    </location>
</feature>
<feature type="binding site" evidence="1">
    <location>
        <position position="21"/>
    </location>
    <ligand>
        <name>ADP</name>
        <dbReference type="ChEBI" id="CHEBI:456216"/>
    </ligand>
</feature>
<feature type="binding site" evidence="1">
    <location>
        <position position="21"/>
    </location>
    <ligand>
        <name>Fe cation</name>
        <dbReference type="ChEBI" id="CHEBI:24875"/>
    </ligand>
</feature>
<feature type="binding site" evidence="1">
    <location>
        <position position="50"/>
    </location>
    <ligand>
        <name>Fe cation</name>
        <dbReference type="ChEBI" id="CHEBI:24875"/>
    </ligand>
</feature>
<feature type="binding site" evidence="1">
    <location>
        <begin position="51"/>
        <end position="54"/>
    </location>
    <ligand>
        <name>ADP</name>
        <dbReference type="ChEBI" id="CHEBI:456216"/>
    </ligand>
</feature>
<feature type="binding site" evidence="1">
    <location>
        <position position="51"/>
    </location>
    <ligand>
        <name>Fe cation</name>
        <dbReference type="ChEBI" id="CHEBI:24875"/>
    </ligand>
</feature>
<feature type="binding site" evidence="1">
    <location>
        <position position="83"/>
    </location>
    <ligand>
        <name>ADP</name>
        <dbReference type="ChEBI" id="CHEBI:456216"/>
    </ligand>
</feature>
<feature type="binding site" evidence="1">
    <location>
        <begin position="109"/>
        <end position="110"/>
    </location>
    <ligand>
        <name>ADP</name>
        <dbReference type="ChEBI" id="CHEBI:456216"/>
    </ligand>
</feature>
<feature type="binding site" evidence="1">
    <location>
        <position position="127"/>
    </location>
    <ligand>
        <name>ADP</name>
        <dbReference type="ChEBI" id="CHEBI:456216"/>
    </ligand>
</feature>
<feature type="binding site" evidence="1">
    <location>
        <position position="127"/>
    </location>
    <ligand>
        <name>Fe cation</name>
        <dbReference type="ChEBI" id="CHEBI:24875"/>
    </ligand>
</feature>
<feature type="binding site" evidence="1">
    <location>
        <position position="133"/>
    </location>
    <ligand>
        <name>ADP</name>
        <dbReference type="ChEBI" id="CHEBI:456216"/>
    </ligand>
</feature>
<feature type="binding site" evidence="1">
    <location>
        <begin position="172"/>
        <end position="177"/>
    </location>
    <ligand>
        <name>ADP</name>
        <dbReference type="ChEBI" id="CHEBI:456216"/>
    </ligand>
</feature>
<name>AP4AH_STAA8</name>
<organism>
    <name type="scientific">Staphylococcus aureus (strain NCTC 8325 / PS 47)</name>
    <dbReference type="NCBI Taxonomy" id="93061"/>
    <lineage>
        <taxon>Bacteria</taxon>
        <taxon>Bacillati</taxon>
        <taxon>Bacillota</taxon>
        <taxon>Bacilli</taxon>
        <taxon>Bacillales</taxon>
        <taxon>Staphylococcaceae</taxon>
        <taxon>Staphylococcus</taxon>
    </lineage>
</organism>
<proteinExistence type="evidence at protein level"/>
<protein>
    <recommendedName>
        <fullName evidence="5">Bis(5'-nucleosyl)-tetraphosphatase, symmetrical</fullName>
        <ecNumber evidence="3">3.6.1.41</ecNumber>
    </recommendedName>
    <alternativeName>
        <fullName evidence="5">Ap4A hydrolase</fullName>
    </alternativeName>
    <alternativeName>
        <fullName evidence="4">Symmetrically cleaving Ap4A hydrolase</fullName>
    </alternativeName>
</protein>
<evidence type="ECO:0000250" key="1">
    <source>
        <dbReference type="UniProtKB" id="Q9KD90"/>
    </source>
</evidence>
<evidence type="ECO:0000255" key="2">
    <source>
        <dbReference type="PROSITE-ProRule" id="PRU01175"/>
    </source>
</evidence>
<evidence type="ECO:0000269" key="3">
    <source>
    </source>
</evidence>
<evidence type="ECO:0000303" key="4">
    <source>
    </source>
</evidence>
<evidence type="ECO:0000305" key="5"/>
<evidence type="ECO:0000312" key="6">
    <source>
        <dbReference type="EMBL" id="ABD30770.1"/>
    </source>
</evidence>
<sequence>MNIEKAKRLAKEKLPEKRYNHSLRVAETAIKLAEIYDGDTSKVELAGVLHDFCKYDDLGKMYQIVRQYELGNDLLSYGSEILHGPVCAAIMEHEYGINDEEVLMAIKYHTTGRQQMTKTEKLIFIADYIEPGRTIPGVDDIRDMAYNQGSLDKTIYEISKRTVLFLIQKDITVYNKTIDCLNYYNYSDERIKDD</sequence>